<sequence length="392" mass="43155">MASHKLLVHPPKALLKPLSIPNRLLLGPGPSNLAPRIMAAGGLQIIGPMSKDMYQIMDEIKEGIRYVFQTRNPLTLVISGSAHCALEAALVNVLEPGDSFLVGANGIWGQRAVDIGERMGARVHPMTKDPGGHYTLQEVEEGLAQHKPVLLFLTHGESSTGVLQPLDGFGELCHRYKCLLLVDSVVSVGGTPVYMDQQGIDILYSGSQKALNAPPGTSLISFSDKAKKKMYSRKTKPFSFYLDIKWLANFWGCDDQPRMYHHTIPIISLYSLRESLALIAEQGLENSWRKHREAAAYLHGRLQALGLQLFVKDPALRLPTVTTVAVPAGYDWRDIVSYVMDHFDIEIMGGLGPPTGKVLRIGLLGYNATHENVDRVTEALRAALQHCPKKKL</sequence>
<organism>
    <name type="scientific">Pongo abelii</name>
    <name type="common">Sumatran orangutan</name>
    <name type="synonym">Pongo pygmaeus abelii</name>
    <dbReference type="NCBI Taxonomy" id="9601"/>
    <lineage>
        <taxon>Eukaryota</taxon>
        <taxon>Metazoa</taxon>
        <taxon>Chordata</taxon>
        <taxon>Craniata</taxon>
        <taxon>Vertebrata</taxon>
        <taxon>Euteleostomi</taxon>
        <taxon>Mammalia</taxon>
        <taxon>Eutheria</taxon>
        <taxon>Euarchontoglires</taxon>
        <taxon>Primates</taxon>
        <taxon>Haplorrhini</taxon>
        <taxon>Catarrhini</taxon>
        <taxon>Hominidae</taxon>
        <taxon>Pongo</taxon>
    </lineage>
</organism>
<evidence type="ECO:0000250" key="1"/>
<evidence type="ECO:0000250" key="2">
    <source>
        <dbReference type="UniProtKB" id="O35423"/>
    </source>
</evidence>
<evidence type="ECO:0000250" key="3">
    <source>
        <dbReference type="UniProtKB" id="P21549"/>
    </source>
</evidence>
<evidence type="ECO:0000305" key="4"/>
<gene>
    <name evidence="3" type="primary">AGXT</name>
</gene>
<keyword id="KW-0007">Acetylation</keyword>
<keyword id="KW-0032">Aminotransferase</keyword>
<keyword id="KW-0576">Peroxisome</keyword>
<keyword id="KW-0663">Pyridoxal phosphate</keyword>
<keyword id="KW-1185">Reference proteome</keyword>
<keyword id="KW-0808">Transferase</keyword>
<dbReference type="EC" id="2.6.1.44" evidence="3"/>
<dbReference type="EC" id="2.6.1.51"/>
<dbReference type="EMBL" id="CR857864">
    <property type="protein sequence ID" value="CAH90117.1"/>
    <property type="molecule type" value="mRNA"/>
</dbReference>
<dbReference type="RefSeq" id="NP_001125018.1">
    <property type="nucleotide sequence ID" value="NM_001131546.1"/>
</dbReference>
<dbReference type="SMR" id="Q5RDP0"/>
<dbReference type="FunCoup" id="Q5RDP0">
    <property type="interactions" value="871"/>
</dbReference>
<dbReference type="STRING" id="9601.ENSPPYP00000014927"/>
<dbReference type="GeneID" id="100171897"/>
<dbReference type="KEGG" id="pon:100171897"/>
<dbReference type="CTD" id="189"/>
<dbReference type="eggNOG" id="KOG2862">
    <property type="taxonomic scope" value="Eukaryota"/>
</dbReference>
<dbReference type="InParanoid" id="Q5RDP0"/>
<dbReference type="OrthoDB" id="7403325at2759"/>
<dbReference type="Proteomes" id="UP000001595">
    <property type="component" value="Unplaced"/>
</dbReference>
<dbReference type="GO" id="GO:0005777">
    <property type="term" value="C:peroxisome"/>
    <property type="evidence" value="ECO:0000250"/>
    <property type="project" value="UniProtKB"/>
</dbReference>
<dbReference type="GO" id="GO:0008453">
    <property type="term" value="F:alanine-glyoxylate transaminase activity"/>
    <property type="evidence" value="ECO:0000250"/>
    <property type="project" value="UniProtKB"/>
</dbReference>
<dbReference type="GO" id="GO:0004760">
    <property type="term" value="F:L-serine-pyruvate transaminase activity"/>
    <property type="evidence" value="ECO:0007669"/>
    <property type="project" value="UniProtKB-EC"/>
</dbReference>
<dbReference type="GO" id="GO:0042803">
    <property type="term" value="F:protein homodimerization activity"/>
    <property type="evidence" value="ECO:0000250"/>
    <property type="project" value="UniProtKB"/>
</dbReference>
<dbReference type="GO" id="GO:0019265">
    <property type="term" value="P:glycine biosynthetic process, by transamination of glyoxylate"/>
    <property type="evidence" value="ECO:0007669"/>
    <property type="project" value="TreeGrafter"/>
</dbReference>
<dbReference type="GO" id="GO:0046487">
    <property type="term" value="P:glyoxylate metabolic process"/>
    <property type="evidence" value="ECO:0000250"/>
    <property type="project" value="UniProtKB"/>
</dbReference>
<dbReference type="CDD" id="cd06451">
    <property type="entry name" value="AGAT_like"/>
    <property type="match status" value="1"/>
</dbReference>
<dbReference type="FunFam" id="3.90.1150.10:FF:000393">
    <property type="entry name" value="Serine--pyruvate aminotransferase"/>
    <property type="match status" value="1"/>
</dbReference>
<dbReference type="FunFam" id="3.40.640.10:FF:000027">
    <property type="entry name" value="Serine--pyruvate aminotransferase, mitochondrial"/>
    <property type="match status" value="1"/>
</dbReference>
<dbReference type="Gene3D" id="3.90.1150.10">
    <property type="entry name" value="Aspartate Aminotransferase, domain 1"/>
    <property type="match status" value="1"/>
</dbReference>
<dbReference type="Gene3D" id="3.40.640.10">
    <property type="entry name" value="Type I PLP-dependent aspartate aminotransferase-like (Major domain)"/>
    <property type="match status" value="1"/>
</dbReference>
<dbReference type="InterPro" id="IPR000192">
    <property type="entry name" value="Aminotrans_V_dom"/>
</dbReference>
<dbReference type="InterPro" id="IPR020578">
    <property type="entry name" value="Aminotrans_V_PyrdxlP_BS"/>
</dbReference>
<dbReference type="InterPro" id="IPR015424">
    <property type="entry name" value="PyrdxlP-dep_Trfase"/>
</dbReference>
<dbReference type="InterPro" id="IPR015421">
    <property type="entry name" value="PyrdxlP-dep_Trfase_major"/>
</dbReference>
<dbReference type="InterPro" id="IPR015422">
    <property type="entry name" value="PyrdxlP-dep_Trfase_small"/>
</dbReference>
<dbReference type="InterPro" id="IPR024169">
    <property type="entry name" value="SP_NH2Trfase/AEP_transaminase"/>
</dbReference>
<dbReference type="PANTHER" id="PTHR21152:SF40">
    <property type="entry name" value="ALANINE--GLYOXYLATE AMINOTRANSFERASE"/>
    <property type="match status" value="1"/>
</dbReference>
<dbReference type="PANTHER" id="PTHR21152">
    <property type="entry name" value="AMINOTRANSFERASE CLASS V"/>
    <property type="match status" value="1"/>
</dbReference>
<dbReference type="Pfam" id="PF00266">
    <property type="entry name" value="Aminotran_5"/>
    <property type="match status" value="1"/>
</dbReference>
<dbReference type="PIRSF" id="PIRSF000524">
    <property type="entry name" value="SPT"/>
    <property type="match status" value="1"/>
</dbReference>
<dbReference type="SUPFAM" id="SSF53383">
    <property type="entry name" value="PLP-dependent transferases"/>
    <property type="match status" value="1"/>
</dbReference>
<dbReference type="PROSITE" id="PS00595">
    <property type="entry name" value="AA_TRANSFER_CLASS_5"/>
    <property type="match status" value="1"/>
</dbReference>
<protein>
    <recommendedName>
        <fullName evidence="3">Alanine--glyoxylate aminotransferase</fullName>
        <shortName>AGT</shortName>
        <ecNumber evidence="3">2.6.1.44</ecNumber>
    </recommendedName>
    <alternativeName>
        <fullName evidence="3">Serine--pyruvate aminotransferase</fullName>
        <shortName>SPT</shortName>
        <ecNumber>2.6.1.51</ecNumber>
    </alternativeName>
</protein>
<reference key="1">
    <citation type="submission" date="2004-11" db="EMBL/GenBank/DDBJ databases">
        <authorList>
            <consortium name="The German cDNA consortium"/>
        </authorList>
    </citation>
    <scope>NUCLEOTIDE SEQUENCE [LARGE SCALE MRNA]</scope>
    <source>
        <tissue>Liver</tissue>
    </source>
</reference>
<name>AGT1_PONAB</name>
<feature type="chain" id="PRO_0000260250" description="Alanine--glyoxylate aminotransferase">
    <location>
        <begin position="1"/>
        <end position="392"/>
    </location>
</feature>
<feature type="short sequence motif" description="Microbody targeting signal">
    <location>
        <begin position="390"/>
        <end position="392"/>
    </location>
</feature>
<feature type="binding site" evidence="1">
    <location>
        <position position="360"/>
    </location>
    <ligand>
        <name>substrate</name>
    </ligand>
</feature>
<feature type="modified residue" description="N6-(pyridoxal phosphate)lysine" evidence="1">
    <location>
        <position position="209"/>
    </location>
</feature>
<feature type="modified residue" description="N6-acetyllysine; alternate" evidence="2">
    <location>
        <position position="225"/>
    </location>
</feature>
<feature type="modified residue" description="N6-succinyllysine; alternate" evidence="2">
    <location>
        <position position="225"/>
    </location>
</feature>
<feature type="modified residue" description="N6-acetyllysine" evidence="2">
    <location>
        <position position="234"/>
    </location>
</feature>
<feature type="modified residue" description="N6-acetyllysine" evidence="2">
    <location>
        <position position="312"/>
    </location>
</feature>
<proteinExistence type="evidence at transcript level"/>
<accession>Q5RDP0</accession>
<comment type="function">
    <text evidence="3">Peroxisomal aminotransferase that catalyzes the transamination of glyoxylate to glycine and contributes to the glyoxylate detoxification. Also catalyzes the transamination between L-serine and pyruvate and contributes to gluconeogenesis from the L-serine metabolism.</text>
</comment>
<comment type="catalytic activity">
    <reaction evidence="3">
        <text>L-serine + pyruvate = 3-hydroxypyruvate + L-alanine</text>
        <dbReference type="Rhea" id="RHEA:22852"/>
        <dbReference type="ChEBI" id="CHEBI:15361"/>
        <dbReference type="ChEBI" id="CHEBI:17180"/>
        <dbReference type="ChEBI" id="CHEBI:33384"/>
        <dbReference type="ChEBI" id="CHEBI:57972"/>
        <dbReference type="EC" id="2.6.1.51"/>
    </reaction>
    <physiologicalReaction direction="left-to-right" evidence="3">
        <dbReference type="Rhea" id="RHEA:22853"/>
    </physiologicalReaction>
</comment>
<comment type="catalytic activity">
    <reaction evidence="3">
        <text>glyoxylate + L-alanine = glycine + pyruvate</text>
        <dbReference type="Rhea" id="RHEA:24248"/>
        <dbReference type="ChEBI" id="CHEBI:15361"/>
        <dbReference type="ChEBI" id="CHEBI:36655"/>
        <dbReference type="ChEBI" id="CHEBI:57305"/>
        <dbReference type="ChEBI" id="CHEBI:57972"/>
        <dbReference type="EC" id="2.6.1.44"/>
    </reaction>
    <physiologicalReaction direction="left-to-right" evidence="3">
        <dbReference type="Rhea" id="RHEA:24249"/>
    </physiologicalReaction>
</comment>
<comment type="cofactor">
    <cofactor evidence="3">
        <name>pyridoxal 5'-phosphate</name>
        <dbReference type="ChEBI" id="CHEBI:597326"/>
    </cofactor>
</comment>
<comment type="subunit">
    <text evidence="3">Homodimer.</text>
</comment>
<comment type="subcellular location">
    <subcellularLocation>
        <location evidence="3">Peroxisome</location>
    </subcellularLocation>
</comment>
<comment type="similarity">
    <text evidence="4">Belongs to the class-V pyridoxal-phosphate-dependent aminotransferase family.</text>
</comment>
<comment type="caution">
    <text evidence="4">The intracellular compartmentalization of AGTX in mammalian hepatocytes is species dependent. In human and rabbit, AGTX is peroxisomal. In new world monkeys (marmoset) and rodents (rat and mouse), it is distributed approximately evenly between peroxisomes and mitochondria. In carnivores, like cat, the great majority of the enzyme is mitochondrial with only a small proportion being peroxisomal.</text>
</comment>